<evidence type="ECO:0000255" key="1"/>
<evidence type="ECO:0000255" key="2">
    <source>
        <dbReference type="PROSITE-ProRule" id="PRU00258"/>
    </source>
</evidence>
<evidence type="ECO:0000255" key="3">
    <source>
        <dbReference type="PROSITE-ProRule" id="PRU01019"/>
    </source>
</evidence>
<evidence type="ECO:0000255" key="4">
    <source>
        <dbReference type="PROSITE-ProRule" id="PRU01348"/>
    </source>
</evidence>
<evidence type="ECO:0000255" key="5">
    <source>
        <dbReference type="PROSITE-ProRule" id="PRU01363"/>
    </source>
</evidence>
<evidence type="ECO:0000256" key="6">
    <source>
        <dbReference type="SAM" id="MobiDB-lite"/>
    </source>
</evidence>
<evidence type="ECO:0000269" key="7">
    <source>
    </source>
</evidence>
<evidence type="ECO:0000269" key="8">
    <source>
    </source>
</evidence>
<evidence type="ECO:0000269" key="9">
    <source>
    </source>
</evidence>
<evidence type="ECO:0000303" key="10">
    <source>
    </source>
</evidence>
<evidence type="ECO:0000305" key="11">
    <source>
    </source>
</evidence>
<organism>
    <name type="scientific">Talaromyces verruculosus</name>
    <name type="common">Penicillium verruculosum</name>
    <dbReference type="NCBI Taxonomy" id="198730"/>
    <lineage>
        <taxon>Eukaryota</taxon>
        <taxon>Fungi</taxon>
        <taxon>Dikarya</taxon>
        <taxon>Ascomycota</taxon>
        <taxon>Pezizomycotina</taxon>
        <taxon>Eurotiomycetes</taxon>
        <taxon>Eurotiomycetidae</taxon>
        <taxon>Eurotiales</taxon>
        <taxon>Trichocomaceae</taxon>
        <taxon>Talaromyces</taxon>
        <taxon>Talaromyces sect. Talaromyces</taxon>
    </lineage>
</organism>
<gene>
    <name evidence="10" type="primary">cdmE</name>
</gene>
<proteinExistence type="evidence at protein level"/>
<comment type="function">
    <text evidence="9 11">Highly reducing polyketide synthase; part of the gene cluster that mediates the biosynthesis of chrodrimanin B, a meroterpenoid that acts as a potent blocker of insect GABA-gated chloride channels (PubMed:30417647). The first step of the pathway is the biosynthesis of 6-hydroxymellein by the polyketide synthase cdmE (PubMed:30417647). The prenyltransferase cdmH acts as a 6-hydroxymellein 5-farnesyltransferase and produces the hydrophobic metabolite verruculide C (PubMed:30417647). The FAD-dependent monooxygenase cdmI further converts verruculide C into verruculide B (PubMed:30417647). The terpene cyclase cdmG then produced the pentacyclic molecule 3-hydroxypentacecilide A, the backbone structure of chrodrimanin B, via folding the farnesyl moiety of the substrate into the chair-boat conformation (PubMed:30417647). The short-chain dehydrogenase/reductase cdmF functions as the 3-OH dehydrogenase that oxidizes the C-3 hydroxyl group of 3-hydroxypentacecilide A and produces chrodrimanin C, the dehydrogenated product of 3-hydroxypentacecilide A (PubMed:30417647). The cytochrome P450 monooxygenase cdmJ then accepts both 3-hydroxypentacecilide A and chrodrimanin C and functions as a C-7-beta-hydroxylase to produce respectively chrodrimanin H and chrodrimanin F (PubMed:30417647). The dioxygenase cdmA accepts chrodrimanin H to afford chrodrimanin E, which is further transformed to chrodrimanin A by the dioxygenase cdmD (PubMed:30417647). CdmA can also accept chrodrimanin C as substrate to convert it into verruculide A, which is further converted into chrodrimanin T by cdmD (PubMed:30417647). The last step of the biosynthesis is proposed to be performed by the acetyltransferase cdmC which acetylates chrodrimanin A to yield chrodrimanin B (Probable). The pathway may also lead to the production of additional shunt products, including chrodrimanins T and U (PubMed:30417647).</text>
</comment>
<comment type="catalytic activity">
    <reaction evidence="9">
        <text>5 malonyl-CoA + AH2 + 5 H(+) = 6-hydroxymellein + A + 5 CO2 + 5 CoA + H2O</text>
        <dbReference type="Rhea" id="RHEA:65248"/>
        <dbReference type="ChEBI" id="CHEBI:13193"/>
        <dbReference type="ChEBI" id="CHEBI:15377"/>
        <dbReference type="ChEBI" id="CHEBI:15378"/>
        <dbReference type="ChEBI" id="CHEBI:16368"/>
        <dbReference type="ChEBI" id="CHEBI:16526"/>
        <dbReference type="ChEBI" id="CHEBI:17499"/>
        <dbReference type="ChEBI" id="CHEBI:57287"/>
        <dbReference type="ChEBI" id="CHEBI:57384"/>
    </reaction>
    <physiologicalReaction direction="left-to-right" evidence="9">
        <dbReference type="Rhea" id="RHEA:65249"/>
    </physiologicalReaction>
</comment>
<comment type="pathway">
    <text evidence="9">Secondary metabolite biosynthesis; terpenoid biosynthesis.</text>
</comment>
<comment type="domain">
    <text evidence="11">Multidomain protein; including a ketosynthase (KS) that catalyzes repeated decarboxylative condensation to elongate the polyketide backbone; a malonyl-CoA:ACP transacylase (MAT) that selects and transfers the extender unit malonyl-CoA; a dehydratase (DH) domain that reduces hydroxyl groups to enoyl groups; a methyltransferase (CMeT) domain responsible for the incorporation of methyl groups; an enoylreductase (ER) domain that reduces enoyl groups to alkyl group; a ketoreductase (KR) domain that catalyzes beta-ketoreduction steps; and an acyl-carrier protein (ACP) that serves as the tether of the growing and completed polyketide via its phosphopantetheinyl arm (Probable). The DH and CMeT domains are inactive due to mutations of their catalytic residues, as consistent with the required reactions to synthesize 6-hydroxymellein (Probable). The ER domain could be active, but it should not affect the PKS chemistry due to the inactive DH domain (Probable).</text>
</comment>
<comment type="biotechnology">
    <text evidence="7 8">Compounds in the chrodrimanin family such as chrodrimanin A or verruculide A exhibit strong inhibitory activities against protein tyrosine phosphatase 1B (PTP1B) and therefore, they could potentially be developed into drugs for the treatment of type 2 diabetes or obesity (PubMed:26115570). Furthermore, chrodrimanin B, the end product of the pathway involving chrodrimanin A or verruculide A, does not exhibit the PTP1B inhibitory activity, while it functions as a potent blocker of insect GABA-gated chloride channels (PubMed:25902139).</text>
</comment>
<accession>A0A3G9GQ29</accession>
<sequence length="2592" mass="284655">MVLHPSDRRFPETNGVGGHSKDSSAKSGYTSLEPLAIVGFASHLAGDATDNENLWKHILEGQSASGPFPQNRLQGNQYFHPDPEHGGTCATKGGYFLKKDIDTFDASFFRLSEYDIAAMDPQQKILLENVYHAVENAGLPMESLAGSRTSVYVGSSTNDHAALTNEDLDFTIKNKATGTLPSLLANRVSWFYDLKGASIVIDTACSSSLVALHMACLDIRAGGSEMAIVSGINLLQHPASLMLLSNLGVLSPDGRSYAFDDRANGYGRGEGVITVVVKSLQAAIRDGDRVRALVRASGVSSDGKTAGITLPSEEEQKVLIRNVYASANLDVNETTYVEAHGTGTPVGDPLECKAIMSAFRTQRRKQTLYIGSIKANIGHLEGGAGLAGLVKAIMMLEKQIIPPIAGLQRLNPLISQDGHNVCFTREAIPWPKSHVRRASVNSFGFGGTNAHVVLESPDMFLHGRSLDTTSTSLVRLPNGYLNGINGQKTPPEDSPKSYVFMISANDENGIQRNAMLLKKYIDNYLKTQCSFSEDQFMKDLVYTLSEKRSRLKWRASIIASSLTELSQQLTGGTLPKFRAANTEPGISFVFTGQGAQWPGMGKMLMEFPIFRQSVEAASLHLQKQGSQWTLHDAFDPIEDSKTDINNPIQSQTACTVLQVALVDLLQSWNISPSIVIGHSSGEIAAAYCAGAISREAAWNISYYRGLVSSILVKGGGGAMIAVGLHPQEAQKYINQLSPELQCMVQIGCYNSPNNTTITGERNAILILQALLDENGVFNRVLATPVAYHSQYMQPVADTYSTLLRLSDLSVGRMRQPQIDEEIVMISSVTGEPIGAKRLQDPQYWTQNLISPVKFMNALHQLKNFAPQFNLQELLELGPHSALQSAIRESMADGQSTAPQIRYSHTITRKKMTYSTILSTAAGLFCRGYPVNLVATSCTDSHHGTLLTDLPGYEFNHDAGLRAESRRMKNSRLPEFPRHELLGSPDPDWDRREPRWRNFLRTSELPWLRDNKVNGGIIFPGVGYSIMAMEAVKQISDRSISIAGYRLKQISMEAALIVPDTRDGLEVMTSLREVYDEGSTTSPKYQFSVKTHDTMRNEWIEHCSGFIESKCESDSIEDMGTWRPLPWDAVHDLQFSEESCTQIGSISAFYDALERSGFDLGPTLKNLVDVRTSATSPHCMTKMAAPSIAEHMPKGYNFPYIIHPSTMESMAHAILHVCTTKEAPVGSALLARYIDNIWISNKIPMDPGHLFVTVADGEQVSPGKWRCAITVWNDATKEVVIQIRGTELCLLSAGRGDQKTVPECFLVKWYPSLDLVTDKLPFASLSSPETGVTEARHAHKTYEQLCTLYIARALKSLHGYDRKLLPQHLQQYLDWMVRQTMDSDAHTMRAILVENEVKLKEESGMLEALRTQAQGLGSRGELLVNVGDHIVPLIKGEKDPQSIIIGGNDLRPWTLDQDLSGNIKNVLSDNLKALRHGQGQLKVLEIGTGFGSVTAHIIKALTSVEDMSQTVFGKYQYTNKHNSSFEDVRQKCGDWLSLMDFQVLDVDQSVAEQGFEEHSYDLVISAHAFTRTVSLERSLKNAHSLLKPGGKLLVIENVQPQYKSTPFVYGLFPGWWHSTEPFRSTTPLVSEDKWVELLEATGFTTSSVKDVENEKSNETCLFLSTAIRTKELIAAPPFDDIVLTHHAYDPKNLVSSLLAAIKQISGLPVIVVPFSQLSHRKMERSFCIVVGELGQGYLDLSCVNEDIYREMKRLLLTCQNLLWISLDDVDYPKAALSTGLVRTLRWEREMDKINFLTLKFAQSSSHVPEIVSAVTSLYQHYFDGKVEASPNSEFLYKDGSFWVNRLYPAKTANNFLQSHISEAPQSQMLGDNVDRSLKARFKGSGRQGLLVWSDDEALSQPLSASEIQIDVQASGLTFQDGMAIRGDIDQHVFGKQVAGTVTQVGQKVEALEPGDHVMALLVGSEQHSLSRSIRVNANFAQRLSPDADFMEAATIPTTFTAVHYALHNVARVMESEKVLVHGAMQAAGQAAIQLAKLAGADVFVTVKTFEQKQKIETKYGIPENHVFIANEHLDAGIKEATGGASGVDIVLNFLHGSATRSAWQCVGMMGRFVDMALKAPGRHRGLDMSPFSRNAMYIGVDIAALGTAHHPSIMKAFSKVGELFRQRLIFGPGHKPFSYNNFGAAMIHIQNDSNMDTAVIVPKADDVIQVVPCKYTAYEFPTDATYVIAGGLGGLGRSAARWMCSKGARHLILISRSGARTASAKELLQDLASQGCKIKICQCDITDKDNLQIAMRECASGMPPIKGCLQSTMLLQDSIFENMSFQQFMAGIHPKVQGSLNVLDAIPDQLDFFLVLSSAASIVGNRGQANYNSANAFQDSLAEHLTSKGIPGMSVNLGNMLSVGWVAENEGALPLDLVYSSIDEPEFHALLEYHLDPRWGASQSVETCHTIAGVRSATRFNEDRTPIPSFMNDPLFTIIRESTNGTTDNGEQEREISISTLLKESSSVQVAASHVTEAIICKLSSVMSFPAAEIDPSQGLASYGVDSLVTVDFRTWIAKDMGANLSTADILDDGNIIGLSEKIARQSKFVKVA</sequence>
<keyword id="KW-0012">Acyltransferase</keyword>
<keyword id="KW-0489">Methyltransferase</keyword>
<keyword id="KW-0511">Multifunctional enzyme</keyword>
<keyword id="KW-0521">NADP</keyword>
<keyword id="KW-0560">Oxidoreductase</keyword>
<keyword id="KW-0596">Phosphopantetheine</keyword>
<keyword id="KW-0597">Phosphoprotein</keyword>
<keyword id="KW-0949">S-adenosyl-L-methionine</keyword>
<keyword id="KW-0808">Transferase</keyword>
<protein>
    <recommendedName>
        <fullName evidence="10">6-hydroxymellein synthase cdmE</fullName>
    </recommendedName>
    <alternativeName>
        <fullName evidence="10">Highly reducing polyketide synthase cdmE</fullName>
        <ecNumber evidence="9">2.3.1.-</ecNumber>
    </alternativeName>
    <alternativeName>
        <fullName evidence="10">chrodrimanin B biosynthesis cluster protein E</fullName>
    </alternativeName>
</protein>
<name>CDME_TALVE</name>
<feature type="chain" id="PRO_0000449130" description="6-hydroxymellein synthase cdmE">
    <location>
        <begin position="1"/>
        <end position="2592"/>
    </location>
</feature>
<feature type="domain" description="Ketosynthase family 3 (KS3)" evidence="4">
    <location>
        <begin position="32"/>
        <end position="456"/>
    </location>
</feature>
<feature type="domain" description="PKS/mFAS DH" evidence="5">
    <location>
        <begin position="978"/>
        <end position="1296"/>
    </location>
</feature>
<feature type="domain" description="Carrier" evidence="2">
    <location>
        <begin position="2509"/>
        <end position="2586"/>
    </location>
</feature>
<feature type="region of interest" description="Disordered" evidence="6">
    <location>
        <begin position="1"/>
        <end position="25"/>
    </location>
</feature>
<feature type="region of interest" description="Malonyl-CoA:ACP transacylase (MAT) domain" evidence="1">
    <location>
        <begin position="589"/>
        <end position="910"/>
    </location>
</feature>
<feature type="region of interest" description="Dehydratase (DH) domain" evidence="1">
    <location>
        <begin position="978"/>
        <end position="1291"/>
    </location>
</feature>
<feature type="region of interest" description="N-terminal hotdog fold" evidence="5">
    <location>
        <begin position="978"/>
        <end position="1113"/>
    </location>
</feature>
<feature type="region of interest" description="C-terminal hotdog fold" evidence="5">
    <location>
        <begin position="1140"/>
        <end position="1296"/>
    </location>
</feature>
<feature type="region of interest" description="Methyltransferase (CMeT) domain" evidence="1">
    <location>
        <begin position="1483"/>
        <end position="1591"/>
    </location>
</feature>
<feature type="region of interest" description="Enoyl reductase (ER) domain" evidence="1">
    <location>
        <begin position="1887"/>
        <end position="2199"/>
    </location>
</feature>
<feature type="region of interest" description="Ketoreductase (KR) domain" evidence="1">
    <location>
        <begin position="2223"/>
        <end position="2398"/>
    </location>
</feature>
<feature type="compositionally biased region" description="Basic and acidic residues" evidence="6">
    <location>
        <begin position="1"/>
        <end position="11"/>
    </location>
</feature>
<feature type="active site" description="For beta-ketoacyl synthase activity" evidence="4">
    <location>
        <position position="205"/>
    </location>
</feature>
<feature type="active site" description="For beta-ketoacyl synthase activity" evidence="4">
    <location>
        <position position="340"/>
    </location>
</feature>
<feature type="active site" description="For beta-ketoacyl synthase activity" evidence="4">
    <location>
        <position position="379"/>
    </location>
</feature>
<feature type="binding site" evidence="3">
    <location>
        <position position="1462"/>
    </location>
    <ligand>
        <name>S-adenosyl-L-methionine</name>
        <dbReference type="ChEBI" id="CHEBI:59789"/>
    </ligand>
</feature>
<feature type="binding site" evidence="3">
    <location>
        <position position="1484"/>
    </location>
    <ligand>
        <name>S-adenosyl-L-methionine</name>
        <dbReference type="ChEBI" id="CHEBI:59789"/>
    </ligand>
</feature>
<feature type="modified residue" description="O-(pantetheine 4'-phosphoryl)serine" evidence="2">
    <location>
        <position position="2546"/>
    </location>
</feature>
<dbReference type="EC" id="2.3.1.-" evidence="9"/>
<dbReference type="EMBL" id="LC422696">
    <property type="protein sequence ID" value="BBG28484.1"/>
    <property type="molecule type" value="Genomic_DNA"/>
</dbReference>
<dbReference type="SMR" id="A0A3G9GQ29"/>
<dbReference type="UniPathway" id="UPA00213"/>
<dbReference type="GO" id="GO:0004312">
    <property type="term" value="F:fatty acid synthase activity"/>
    <property type="evidence" value="ECO:0007669"/>
    <property type="project" value="TreeGrafter"/>
</dbReference>
<dbReference type="GO" id="GO:0008168">
    <property type="term" value="F:methyltransferase activity"/>
    <property type="evidence" value="ECO:0007669"/>
    <property type="project" value="UniProtKB-KW"/>
</dbReference>
<dbReference type="GO" id="GO:0016491">
    <property type="term" value="F:oxidoreductase activity"/>
    <property type="evidence" value="ECO:0007669"/>
    <property type="project" value="UniProtKB-KW"/>
</dbReference>
<dbReference type="GO" id="GO:0031177">
    <property type="term" value="F:phosphopantetheine binding"/>
    <property type="evidence" value="ECO:0007669"/>
    <property type="project" value="InterPro"/>
</dbReference>
<dbReference type="GO" id="GO:0006633">
    <property type="term" value="P:fatty acid biosynthetic process"/>
    <property type="evidence" value="ECO:0007669"/>
    <property type="project" value="TreeGrafter"/>
</dbReference>
<dbReference type="GO" id="GO:0032259">
    <property type="term" value="P:methylation"/>
    <property type="evidence" value="ECO:0007669"/>
    <property type="project" value="UniProtKB-KW"/>
</dbReference>
<dbReference type="GO" id="GO:0044550">
    <property type="term" value="P:secondary metabolite biosynthetic process"/>
    <property type="evidence" value="ECO:0007669"/>
    <property type="project" value="UniProtKB-ARBA"/>
</dbReference>
<dbReference type="GO" id="GO:0016114">
    <property type="term" value="P:terpenoid biosynthetic process"/>
    <property type="evidence" value="ECO:0007669"/>
    <property type="project" value="UniProtKB-UniPathway"/>
</dbReference>
<dbReference type="CDD" id="cd02440">
    <property type="entry name" value="AdoMet_MTases"/>
    <property type="match status" value="1"/>
</dbReference>
<dbReference type="CDD" id="cd05195">
    <property type="entry name" value="enoyl_red"/>
    <property type="match status" value="1"/>
</dbReference>
<dbReference type="CDD" id="cd00833">
    <property type="entry name" value="PKS"/>
    <property type="match status" value="1"/>
</dbReference>
<dbReference type="Gene3D" id="3.40.47.10">
    <property type="match status" value="1"/>
</dbReference>
<dbReference type="Gene3D" id="1.10.1200.10">
    <property type="entry name" value="ACP-like"/>
    <property type="match status" value="1"/>
</dbReference>
<dbReference type="Gene3D" id="3.40.366.10">
    <property type="entry name" value="Malonyl-Coenzyme A Acyl Carrier Protein, domain 2"/>
    <property type="match status" value="1"/>
</dbReference>
<dbReference type="Gene3D" id="3.90.180.10">
    <property type="entry name" value="Medium-chain alcohol dehydrogenases, catalytic domain"/>
    <property type="match status" value="1"/>
</dbReference>
<dbReference type="Gene3D" id="3.40.50.720">
    <property type="entry name" value="NAD(P)-binding Rossmann-like Domain"/>
    <property type="match status" value="2"/>
</dbReference>
<dbReference type="Gene3D" id="3.10.129.110">
    <property type="entry name" value="Polyketide synthase dehydratase"/>
    <property type="match status" value="1"/>
</dbReference>
<dbReference type="Gene3D" id="3.40.50.150">
    <property type="entry name" value="Vaccinia Virus protein VP39"/>
    <property type="match status" value="1"/>
</dbReference>
<dbReference type="InterPro" id="IPR001227">
    <property type="entry name" value="Ac_transferase_dom_sf"/>
</dbReference>
<dbReference type="InterPro" id="IPR036736">
    <property type="entry name" value="ACP-like_sf"/>
</dbReference>
<dbReference type="InterPro" id="IPR014043">
    <property type="entry name" value="Acyl_transferase_dom"/>
</dbReference>
<dbReference type="InterPro" id="IPR016035">
    <property type="entry name" value="Acyl_Trfase/lysoPLipase"/>
</dbReference>
<dbReference type="InterPro" id="IPR013149">
    <property type="entry name" value="ADH-like_C"/>
</dbReference>
<dbReference type="InterPro" id="IPR013154">
    <property type="entry name" value="ADH-like_N"/>
</dbReference>
<dbReference type="InterPro" id="IPR011032">
    <property type="entry name" value="GroES-like_sf"/>
</dbReference>
<dbReference type="InterPro" id="IPR014031">
    <property type="entry name" value="Ketoacyl_synth_C"/>
</dbReference>
<dbReference type="InterPro" id="IPR014030">
    <property type="entry name" value="Ketoacyl_synth_N"/>
</dbReference>
<dbReference type="InterPro" id="IPR016036">
    <property type="entry name" value="Malonyl_transacylase_ACP-bd"/>
</dbReference>
<dbReference type="InterPro" id="IPR013217">
    <property type="entry name" value="Methyltransf_12"/>
</dbReference>
<dbReference type="InterPro" id="IPR036291">
    <property type="entry name" value="NAD(P)-bd_dom_sf"/>
</dbReference>
<dbReference type="InterPro" id="IPR032821">
    <property type="entry name" value="PKS_assoc"/>
</dbReference>
<dbReference type="InterPro" id="IPR020841">
    <property type="entry name" value="PKS_Beta-ketoAc_synthase_dom"/>
</dbReference>
<dbReference type="InterPro" id="IPR042104">
    <property type="entry name" value="PKS_dehydratase_sf"/>
</dbReference>
<dbReference type="InterPro" id="IPR020807">
    <property type="entry name" value="PKS_DH"/>
</dbReference>
<dbReference type="InterPro" id="IPR049551">
    <property type="entry name" value="PKS_DH_C"/>
</dbReference>
<dbReference type="InterPro" id="IPR049552">
    <property type="entry name" value="PKS_DH_N"/>
</dbReference>
<dbReference type="InterPro" id="IPR020843">
    <property type="entry name" value="PKS_ER"/>
</dbReference>
<dbReference type="InterPro" id="IPR013968">
    <property type="entry name" value="PKS_KR"/>
</dbReference>
<dbReference type="InterPro" id="IPR049900">
    <property type="entry name" value="PKS_mFAS_DH"/>
</dbReference>
<dbReference type="InterPro" id="IPR050091">
    <property type="entry name" value="PKS_NRPS_Biosynth_Enz"/>
</dbReference>
<dbReference type="InterPro" id="IPR020806">
    <property type="entry name" value="PKS_PP-bd"/>
</dbReference>
<dbReference type="InterPro" id="IPR009081">
    <property type="entry name" value="PP-bd_ACP"/>
</dbReference>
<dbReference type="InterPro" id="IPR029063">
    <property type="entry name" value="SAM-dependent_MTases_sf"/>
</dbReference>
<dbReference type="InterPro" id="IPR016039">
    <property type="entry name" value="Thiolase-like"/>
</dbReference>
<dbReference type="PANTHER" id="PTHR43775:SF29">
    <property type="entry name" value="ASPERFURANONE POLYKETIDE SYNTHASE AFOG-RELATED"/>
    <property type="match status" value="1"/>
</dbReference>
<dbReference type="PANTHER" id="PTHR43775">
    <property type="entry name" value="FATTY ACID SYNTHASE"/>
    <property type="match status" value="1"/>
</dbReference>
<dbReference type="Pfam" id="PF23297">
    <property type="entry name" value="ACP_SdgA_C"/>
    <property type="match status" value="1"/>
</dbReference>
<dbReference type="Pfam" id="PF00698">
    <property type="entry name" value="Acyl_transf_1"/>
    <property type="match status" value="1"/>
</dbReference>
<dbReference type="Pfam" id="PF08240">
    <property type="entry name" value="ADH_N"/>
    <property type="match status" value="1"/>
</dbReference>
<dbReference type="Pfam" id="PF00107">
    <property type="entry name" value="ADH_zinc_N"/>
    <property type="match status" value="1"/>
</dbReference>
<dbReference type="Pfam" id="PF16197">
    <property type="entry name" value="KAsynt_C_assoc"/>
    <property type="match status" value="1"/>
</dbReference>
<dbReference type="Pfam" id="PF00109">
    <property type="entry name" value="ketoacyl-synt"/>
    <property type="match status" value="1"/>
</dbReference>
<dbReference type="Pfam" id="PF02801">
    <property type="entry name" value="Ketoacyl-synt_C"/>
    <property type="match status" value="1"/>
</dbReference>
<dbReference type="Pfam" id="PF08659">
    <property type="entry name" value="KR"/>
    <property type="match status" value="1"/>
</dbReference>
<dbReference type="Pfam" id="PF08242">
    <property type="entry name" value="Methyltransf_12"/>
    <property type="match status" value="1"/>
</dbReference>
<dbReference type="Pfam" id="PF21089">
    <property type="entry name" value="PKS_DH_N"/>
    <property type="match status" value="1"/>
</dbReference>
<dbReference type="Pfam" id="PF14765">
    <property type="entry name" value="PS-DH"/>
    <property type="match status" value="1"/>
</dbReference>
<dbReference type="SMART" id="SM00827">
    <property type="entry name" value="PKS_AT"/>
    <property type="match status" value="1"/>
</dbReference>
<dbReference type="SMART" id="SM00826">
    <property type="entry name" value="PKS_DH"/>
    <property type="match status" value="1"/>
</dbReference>
<dbReference type="SMART" id="SM00829">
    <property type="entry name" value="PKS_ER"/>
    <property type="match status" value="1"/>
</dbReference>
<dbReference type="SMART" id="SM00822">
    <property type="entry name" value="PKS_KR"/>
    <property type="match status" value="1"/>
</dbReference>
<dbReference type="SMART" id="SM00825">
    <property type="entry name" value="PKS_KS"/>
    <property type="match status" value="1"/>
</dbReference>
<dbReference type="SMART" id="SM00823">
    <property type="entry name" value="PKS_PP"/>
    <property type="match status" value="1"/>
</dbReference>
<dbReference type="SUPFAM" id="SSF47336">
    <property type="entry name" value="ACP-like"/>
    <property type="match status" value="1"/>
</dbReference>
<dbReference type="SUPFAM" id="SSF52151">
    <property type="entry name" value="FabD/lysophospholipase-like"/>
    <property type="match status" value="1"/>
</dbReference>
<dbReference type="SUPFAM" id="SSF50129">
    <property type="entry name" value="GroES-like"/>
    <property type="match status" value="1"/>
</dbReference>
<dbReference type="SUPFAM" id="SSF51735">
    <property type="entry name" value="NAD(P)-binding Rossmann-fold domains"/>
    <property type="match status" value="2"/>
</dbReference>
<dbReference type="SUPFAM" id="SSF55048">
    <property type="entry name" value="Probable ACP-binding domain of malonyl-CoA ACP transacylase"/>
    <property type="match status" value="1"/>
</dbReference>
<dbReference type="SUPFAM" id="SSF53335">
    <property type="entry name" value="S-adenosyl-L-methionine-dependent methyltransferases"/>
    <property type="match status" value="1"/>
</dbReference>
<dbReference type="SUPFAM" id="SSF53901">
    <property type="entry name" value="Thiolase-like"/>
    <property type="match status" value="1"/>
</dbReference>
<dbReference type="PROSITE" id="PS50075">
    <property type="entry name" value="CARRIER"/>
    <property type="match status" value="1"/>
</dbReference>
<dbReference type="PROSITE" id="PS52004">
    <property type="entry name" value="KS3_2"/>
    <property type="match status" value="1"/>
</dbReference>
<dbReference type="PROSITE" id="PS52019">
    <property type="entry name" value="PKS_MFAS_DH"/>
    <property type="match status" value="1"/>
</dbReference>
<reference key="1">
    <citation type="journal article" date="2018" name="Org. Lett.">
        <title>Elucidation and heterologous reconstitution of chrodrimanin B biosynthesis.</title>
        <authorList>
            <person name="Bai T."/>
            <person name="Quan Z."/>
            <person name="Zhai R."/>
            <person name="Awakawa T."/>
            <person name="Matsuda Y."/>
            <person name="Abe I."/>
        </authorList>
    </citation>
    <scope>NUCLEOTIDE SEQUENCE [GENOMIC DNA]</scope>
    <scope>FUNCTION</scope>
    <scope>DOMAIN</scope>
    <scope>CATALYTIC ACTIVITY</scope>
    <scope>PATHWAY</scope>
    <source>
        <strain>TPU1311</strain>
    </source>
</reference>
<reference key="2">
    <citation type="journal article" date="2015" name="Bioorg. Med. Chem. Lett.">
        <title>Verruculides A and B, two new protein tyrosine phosphatase 1B inhibitors from an Indonesian ascidian-derived Penicillium verruculosum.</title>
        <authorList>
            <person name="Yamazaki H."/>
            <person name="Nakayama W."/>
            <person name="Takahashi O."/>
            <person name="Kirikoshi R."/>
            <person name="Izumikawa Y."/>
            <person name="Iwasaki K."/>
            <person name="Toraiwa K."/>
            <person name="Ukai K."/>
            <person name="Rotinsulu H."/>
            <person name="Wewengkang D.S."/>
            <person name="Sumilat D.A."/>
            <person name="Mangindaan R.E."/>
            <person name="Namikoshi M."/>
        </authorList>
    </citation>
    <scope>BIOTECHNOLOGY</scope>
</reference>
<reference key="3">
    <citation type="journal article" date="2015" name="PLoS ONE">
        <title>Meroterpenoid Chrodrimanins Are Selective and Potent Blockers of Insect GABA-Gated Chloride Channels.</title>
        <authorList>
            <person name="Xu Y."/>
            <person name="Furutani S."/>
            <person name="Ihara M."/>
            <person name="Ling Y."/>
            <person name="Yang X."/>
            <person name="Kai K."/>
            <person name="Hayashi H."/>
            <person name="Matsuda K."/>
        </authorList>
    </citation>
    <scope>BIOTECHNOLOGY</scope>
</reference>